<protein>
    <recommendedName>
        <fullName>Interferon-induced GTP-binding protein Mx1</fullName>
    </recommendedName>
    <alternativeName>
        <fullName>Myxoma resistance protein 1</fullName>
    </alternativeName>
    <alternativeName>
        <fullName>Myxovirus resistance protein 1</fullName>
    </alternativeName>
</protein>
<feature type="chain" id="PRO_0000319956" description="Interferon-induced GTP-binding protein Mx1">
    <location>
        <begin position="1"/>
        <end position="662"/>
    </location>
</feature>
<feature type="domain" description="Dynamin-type G" evidence="5">
    <location>
        <begin position="67"/>
        <end position="340"/>
    </location>
</feature>
<feature type="domain" description="GED" evidence="4">
    <location>
        <begin position="574"/>
        <end position="662"/>
    </location>
</feature>
<feature type="region of interest" description="G1 motif" evidence="5">
    <location>
        <begin position="77"/>
        <end position="84"/>
    </location>
</feature>
<feature type="region of interest" description="G2 motif" evidence="5">
    <location>
        <begin position="102"/>
        <end position="104"/>
    </location>
</feature>
<feature type="region of interest" description="G3 motif" evidence="5">
    <location>
        <begin position="178"/>
        <end position="181"/>
    </location>
</feature>
<feature type="region of interest" description="G4 motif" evidence="5">
    <location>
        <begin position="247"/>
        <end position="250"/>
    </location>
</feature>
<feature type="region of interest" description="G5 motif" evidence="5">
    <location>
        <begin position="279"/>
        <end position="282"/>
    </location>
</feature>
<feature type="region of interest" description="Bundle signaling element (BSE)" evidence="1">
    <location>
        <begin position="341"/>
        <end position="366"/>
    </location>
</feature>
<feature type="region of interest" description="Middle domain" evidence="1">
    <location>
        <begin position="366"/>
        <end position="533"/>
    </location>
</feature>
<feature type="region of interest" description="Stalk" evidence="1">
    <location>
        <begin position="367"/>
        <end position="632"/>
    </location>
</feature>
<feature type="region of interest" description="Critical for lipid-binding" evidence="1">
    <location>
        <begin position="554"/>
        <end position="557"/>
    </location>
</feature>
<feature type="binding site" evidence="3">
    <location>
        <begin position="77"/>
        <end position="84"/>
    </location>
    <ligand>
        <name>GTP</name>
        <dbReference type="ChEBI" id="CHEBI:37565"/>
    </ligand>
</feature>
<feature type="binding site" evidence="3">
    <location>
        <begin position="178"/>
        <end position="182"/>
    </location>
    <ligand>
        <name>GTP</name>
        <dbReference type="ChEBI" id="CHEBI:37565"/>
    </ligand>
</feature>
<feature type="binding site" evidence="3">
    <location>
        <begin position="247"/>
        <end position="250"/>
    </location>
    <ligand>
        <name>GTP</name>
        <dbReference type="ChEBI" id="CHEBI:37565"/>
    </ligand>
</feature>
<feature type="modified residue" description="N-acetylmethionine" evidence="2">
    <location>
        <position position="1"/>
    </location>
</feature>
<comment type="function">
    <text evidence="1">Interferon-induced dynamin-like GTPase with antiviral activity.</text>
</comment>
<comment type="subunit">
    <text evidence="1">Homooligomer. Oligomerizes into multimeric filamentous or ring-like structures by virtue of its stalk domain. Oligomerization is critical for GTPase activity, protein stability, and recognition of viral target structures (By similarity). Interacts with TRPC1, TRPC3, TRPC4, TRPC5, TRPC6 and TRPC7 (By similarity). Interacts with HSPA5 (By similarity). Interacts with TUBB/TUBB5 (By similarity). Interacts with DDX39A and DDX39B (By similarity).</text>
</comment>
<comment type="subcellular location">
    <subcellularLocation>
        <location evidence="2">Cytoplasm</location>
    </subcellularLocation>
    <subcellularLocation>
        <location evidence="2">Endoplasmic reticulum membrane</location>
        <topology evidence="2">Peripheral membrane protein</topology>
        <orientation evidence="2">Cytoplasmic side</orientation>
    </subcellularLocation>
    <subcellularLocation>
        <location evidence="2">Cytoplasm</location>
        <location evidence="2">Perinuclear region</location>
    </subcellularLocation>
    <text evidence="2">Binds preferentially to negatively charged phospholipids.</text>
</comment>
<comment type="induction">
    <text evidence="6">By type I and type III interferons.</text>
</comment>
<comment type="domain">
    <text evidence="1">The C-terminal GTPase effector domain (GED) is involved in oligomerization and viral target recognition.</text>
</comment>
<comment type="domain">
    <text evidence="1">The middle domain mediates self-assembly and oligomerization.</text>
</comment>
<comment type="PTM">
    <text evidence="1">ISGylated.</text>
</comment>
<comment type="similarity">
    <text evidence="5">Belongs to the TRAFAC class dynamin-like GTPase superfamily. Dynamin/Fzo/YdjA family.</text>
</comment>
<dbReference type="EMBL" id="CR860897">
    <property type="protein sequence ID" value="CAH93003.1"/>
    <property type="molecule type" value="mRNA"/>
</dbReference>
<dbReference type="RefSeq" id="NP_001127618.1">
    <property type="nucleotide sequence ID" value="NM_001134146.2"/>
</dbReference>
<dbReference type="SMR" id="Q5R5G3"/>
<dbReference type="FunCoup" id="Q5R5G3">
    <property type="interactions" value="279"/>
</dbReference>
<dbReference type="STRING" id="9601.ENSPPYP00000012765"/>
<dbReference type="GeneID" id="100174697"/>
<dbReference type="KEGG" id="pon:100174697"/>
<dbReference type="CTD" id="4599"/>
<dbReference type="eggNOG" id="KOG0446">
    <property type="taxonomic scope" value="Eukaryota"/>
</dbReference>
<dbReference type="InParanoid" id="Q5R5G3"/>
<dbReference type="OrthoDB" id="5061070at2759"/>
<dbReference type="Proteomes" id="UP000001595">
    <property type="component" value="Unplaced"/>
</dbReference>
<dbReference type="GO" id="GO:0005737">
    <property type="term" value="C:cytoplasm"/>
    <property type="evidence" value="ECO:0000250"/>
    <property type="project" value="UniProtKB"/>
</dbReference>
<dbReference type="GO" id="GO:0005789">
    <property type="term" value="C:endoplasmic reticulum membrane"/>
    <property type="evidence" value="ECO:0007669"/>
    <property type="project" value="UniProtKB-SubCell"/>
</dbReference>
<dbReference type="GO" id="GO:0005874">
    <property type="term" value="C:microtubule"/>
    <property type="evidence" value="ECO:0007669"/>
    <property type="project" value="TreeGrafter"/>
</dbReference>
<dbReference type="GO" id="GO:0005634">
    <property type="term" value="C:nucleus"/>
    <property type="evidence" value="ECO:0007669"/>
    <property type="project" value="TreeGrafter"/>
</dbReference>
<dbReference type="GO" id="GO:0048471">
    <property type="term" value="C:perinuclear region of cytoplasm"/>
    <property type="evidence" value="ECO:0007669"/>
    <property type="project" value="UniProtKB-SubCell"/>
</dbReference>
<dbReference type="GO" id="GO:0005886">
    <property type="term" value="C:plasma membrane"/>
    <property type="evidence" value="ECO:0007669"/>
    <property type="project" value="TreeGrafter"/>
</dbReference>
<dbReference type="GO" id="GO:0098793">
    <property type="term" value="C:presynapse"/>
    <property type="evidence" value="ECO:0007669"/>
    <property type="project" value="GOC"/>
</dbReference>
<dbReference type="GO" id="GO:0005525">
    <property type="term" value="F:GTP binding"/>
    <property type="evidence" value="ECO:0007669"/>
    <property type="project" value="UniProtKB-KW"/>
</dbReference>
<dbReference type="GO" id="GO:0003924">
    <property type="term" value="F:GTPase activity"/>
    <property type="evidence" value="ECO:0007669"/>
    <property type="project" value="InterPro"/>
</dbReference>
<dbReference type="GO" id="GO:0008017">
    <property type="term" value="F:microtubule binding"/>
    <property type="evidence" value="ECO:0007669"/>
    <property type="project" value="TreeGrafter"/>
</dbReference>
<dbReference type="GO" id="GO:0051607">
    <property type="term" value="P:defense response to virus"/>
    <property type="evidence" value="ECO:0007669"/>
    <property type="project" value="UniProtKB-KW"/>
</dbReference>
<dbReference type="GO" id="GO:0045087">
    <property type="term" value="P:innate immune response"/>
    <property type="evidence" value="ECO:0007669"/>
    <property type="project" value="UniProtKB-KW"/>
</dbReference>
<dbReference type="GO" id="GO:0031623">
    <property type="term" value="P:receptor internalization"/>
    <property type="evidence" value="ECO:0007669"/>
    <property type="project" value="TreeGrafter"/>
</dbReference>
<dbReference type="GO" id="GO:0016185">
    <property type="term" value="P:synaptic vesicle budding from presynaptic endocytic zone membrane"/>
    <property type="evidence" value="ECO:0007669"/>
    <property type="project" value="TreeGrafter"/>
</dbReference>
<dbReference type="CDD" id="cd08771">
    <property type="entry name" value="DLP_1"/>
    <property type="match status" value="1"/>
</dbReference>
<dbReference type="FunFam" id="1.20.120.1240:FF:000007">
    <property type="entry name" value="Interferon-induced GTP-binding protein Mx1"/>
    <property type="match status" value="1"/>
</dbReference>
<dbReference type="FunFam" id="3.40.50.300:FF:000621">
    <property type="entry name" value="Interferon-induced GTP-binding protein Mx1"/>
    <property type="match status" value="1"/>
</dbReference>
<dbReference type="Gene3D" id="1.20.120.1240">
    <property type="entry name" value="Dynamin, middle domain"/>
    <property type="match status" value="1"/>
</dbReference>
<dbReference type="Gene3D" id="3.40.50.300">
    <property type="entry name" value="P-loop containing nucleotide triphosphate hydrolases"/>
    <property type="match status" value="1"/>
</dbReference>
<dbReference type="InterPro" id="IPR022812">
    <property type="entry name" value="Dynamin"/>
</dbReference>
<dbReference type="InterPro" id="IPR001401">
    <property type="entry name" value="Dynamin_GTPase"/>
</dbReference>
<dbReference type="InterPro" id="IPR019762">
    <property type="entry name" value="Dynamin_GTPase_CS"/>
</dbReference>
<dbReference type="InterPro" id="IPR045063">
    <property type="entry name" value="Dynamin_N"/>
</dbReference>
<dbReference type="InterPro" id="IPR000375">
    <property type="entry name" value="Dynamin_stalk"/>
</dbReference>
<dbReference type="InterPro" id="IPR030381">
    <property type="entry name" value="G_DYNAMIN_dom"/>
</dbReference>
<dbReference type="InterPro" id="IPR003130">
    <property type="entry name" value="GED"/>
</dbReference>
<dbReference type="InterPro" id="IPR020850">
    <property type="entry name" value="GED_dom"/>
</dbReference>
<dbReference type="InterPro" id="IPR027417">
    <property type="entry name" value="P-loop_NTPase"/>
</dbReference>
<dbReference type="PANTHER" id="PTHR11566">
    <property type="entry name" value="DYNAMIN"/>
    <property type="match status" value="1"/>
</dbReference>
<dbReference type="PANTHER" id="PTHR11566:SF217">
    <property type="entry name" value="INTERFERON-INDUCED GTP-BINDING PROTEIN MX1"/>
    <property type="match status" value="1"/>
</dbReference>
<dbReference type="Pfam" id="PF01031">
    <property type="entry name" value="Dynamin_M"/>
    <property type="match status" value="1"/>
</dbReference>
<dbReference type="Pfam" id="PF00350">
    <property type="entry name" value="Dynamin_N"/>
    <property type="match status" value="1"/>
</dbReference>
<dbReference type="Pfam" id="PF02212">
    <property type="entry name" value="GED"/>
    <property type="match status" value="1"/>
</dbReference>
<dbReference type="PRINTS" id="PR00195">
    <property type="entry name" value="DYNAMIN"/>
</dbReference>
<dbReference type="SMART" id="SM00053">
    <property type="entry name" value="DYNc"/>
    <property type="match status" value="1"/>
</dbReference>
<dbReference type="SMART" id="SM00302">
    <property type="entry name" value="GED"/>
    <property type="match status" value="1"/>
</dbReference>
<dbReference type="SUPFAM" id="SSF52540">
    <property type="entry name" value="P-loop containing nucleoside triphosphate hydrolases"/>
    <property type="match status" value="1"/>
</dbReference>
<dbReference type="PROSITE" id="PS00410">
    <property type="entry name" value="G_DYNAMIN_1"/>
    <property type="match status" value="1"/>
</dbReference>
<dbReference type="PROSITE" id="PS51718">
    <property type="entry name" value="G_DYNAMIN_2"/>
    <property type="match status" value="1"/>
</dbReference>
<dbReference type="PROSITE" id="PS51388">
    <property type="entry name" value="GED"/>
    <property type="match status" value="1"/>
</dbReference>
<proteinExistence type="evidence at transcript level"/>
<keyword id="KW-0007">Acetylation</keyword>
<keyword id="KW-0051">Antiviral defense</keyword>
<keyword id="KW-0963">Cytoplasm</keyword>
<keyword id="KW-0256">Endoplasmic reticulum</keyword>
<keyword id="KW-0342">GTP-binding</keyword>
<keyword id="KW-0391">Immunity</keyword>
<keyword id="KW-0399">Innate immunity</keyword>
<keyword id="KW-0472">Membrane</keyword>
<keyword id="KW-0547">Nucleotide-binding</keyword>
<keyword id="KW-1185">Reference proteome</keyword>
<keyword id="KW-0832">Ubl conjugation</keyword>
<name>MX1_PONAB</name>
<evidence type="ECO:0000250" key="1"/>
<evidence type="ECO:0000250" key="2">
    <source>
        <dbReference type="UniProtKB" id="P20591"/>
    </source>
</evidence>
<evidence type="ECO:0000255" key="3"/>
<evidence type="ECO:0000255" key="4">
    <source>
        <dbReference type="PROSITE-ProRule" id="PRU00720"/>
    </source>
</evidence>
<evidence type="ECO:0000255" key="5">
    <source>
        <dbReference type="PROSITE-ProRule" id="PRU01055"/>
    </source>
</evidence>
<evidence type="ECO:0000269" key="6">
    <source>
    </source>
</evidence>
<reference key="1">
    <citation type="submission" date="2004-11" db="EMBL/GenBank/DDBJ databases">
        <authorList>
            <consortium name="The German cDNA consortium"/>
        </authorList>
    </citation>
    <scope>NUCLEOTIDE SEQUENCE [LARGE SCALE MRNA]</scope>
    <source>
        <tissue>Kidney</tissue>
    </source>
</reference>
<reference key="2">
    <citation type="journal article" date="2007" name="Microbes Infect.">
        <title>The Mx GTPase family of interferon-induced antiviral proteins.</title>
        <authorList>
            <person name="Haller O."/>
            <person name="Stertz S."/>
            <person name="Kochs G."/>
        </authorList>
    </citation>
    <scope>REVIEW</scope>
    <scope>INDUCTION</scope>
</reference>
<accession>Q5R5G3</accession>
<sequence>MVLSEVDIAKADPAAASHPVLLNGDANVAQKNLGSVAENNLCSQYEEKVRPCIDLIDSLRALGVEQDLALPAIAVIGDQSSGKSSVLEALSGVALPRGSGIVTRCPLVLKLKKLVNEDKWRGKVSYQDYEIEISDASEVEKEINKAQNTIAGEGMGISHELITLEISSRDVPDLTLIDLPGITRVAVGNQPADIGYKIKTLIKKYIQRQETISLVVVPSNVDIATTEALSMAQEVDPEGDRTIGILTKPDLVDKGTEDKVVDVVRNLVFHLKKGYMIVKCRGQQEIQDQLSLSEALQREKIFFEDHPYFRDLLEEGKATVPCLAEKLTSELITHICKSLPLLENQIRESHQRITEELQKYGVDVPEDENEKMFFLIDKINAFNQDITALIQGEETVGEEDIRLFTRLRHEFHKWSIIIENNFQEGHKILSRKIQKFENQYRGRGLPGFVNYRTFETIVKQQIKALEEPAVDMLHTVTDMVRLAFTDVSIKNFEEFFNLHRTAKSKIEDIRAEQEREGEKLIRLHFQMEQIVYCQDQVYRGALQKVREKELEEEKKKKSWDFGAFQSSSATDSSMEEIFQHLMAYHQEASKRISSHIPLIIQFFMLQTYGQQLQKAMLQLLQDKDTYSWLLKERGDTSDKRKFLKERLARLTQARRRLAQFPG</sequence>
<organism>
    <name type="scientific">Pongo abelii</name>
    <name type="common">Sumatran orangutan</name>
    <name type="synonym">Pongo pygmaeus abelii</name>
    <dbReference type="NCBI Taxonomy" id="9601"/>
    <lineage>
        <taxon>Eukaryota</taxon>
        <taxon>Metazoa</taxon>
        <taxon>Chordata</taxon>
        <taxon>Craniata</taxon>
        <taxon>Vertebrata</taxon>
        <taxon>Euteleostomi</taxon>
        <taxon>Mammalia</taxon>
        <taxon>Eutheria</taxon>
        <taxon>Euarchontoglires</taxon>
        <taxon>Primates</taxon>
        <taxon>Haplorrhini</taxon>
        <taxon>Catarrhini</taxon>
        <taxon>Hominidae</taxon>
        <taxon>Pongo</taxon>
    </lineage>
</organism>
<gene>
    <name type="primary">MX1</name>
</gene>